<proteinExistence type="inferred from homology"/>
<comment type="function">
    <text evidence="1">Functions in the biosynthesis of branched-chain amino acids. Catalyzes the dehydration of (2R,3R)-2,3-dihydroxy-3-methylpentanoate (2,3-dihydroxy-3-methylvalerate) into 2-oxo-3-methylpentanoate (2-oxo-3-methylvalerate) and of (2R)-2,3-dihydroxy-3-methylbutanoate (2,3-dihydroxyisovalerate) into 2-oxo-3-methylbutanoate (2-oxoisovalerate), the penultimate precursor to L-isoleucine and L-valine, respectively.</text>
</comment>
<comment type="catalytic activity">
    <reaction evidence="1">
        <text>(2R)-2,3-dihydroxy-3-methylbutanoate = 3-methyl-2-oxobutanoate + H2O</text>
        <dbReference type="Rhea" id="RHEA:24809"/>
        <dbReference type="ChEBI" id="CHEBI:11851"/>
        <dbReference type="ChEBI" id="CHEBI:15377"/>
        <dbReference type="ChEBI" id="CHEBI:49072"/>
        <dbReference type="EC" id="4.2.1.9"/>
    </reaction>
    <physiologicalReaction direction="left-to-right" evidence="1">
        <dbReference type="Rhea" id="RHEA:24810"/>
    </physiologicalReaction>
</comment>
<comment type="catalytic activity">
    <reaction evidence="1">
        <text>(2R,3R)-2,3-dihydroxy-3-methylpentanoate = (S)-3-methyl-2-oxopentanoate + H2O</text>
        <dbReference type="Rhea" id="RHEA:27694"/>
        <dbReference type="ChEBI" id="CHEBI:15377"/>
        <dbReference type="ChEBI" id="CHEBI:35146"/>
        <dbReference type="ChEBI" id="CHEBI:49258"/>
        <dbReference type="EC" id="4.2.1.9"/>
    </reaction>
    <physiologicalReaction direction="left-to-right" evidence="1">
        <dbReference type="Rhea" id="RHEA:27695"/>
    </physiologicalReaction>
</comment>
<comment type="cofactor">
    <cofactor evidence="1">
        <name>[2Fe-2S] cluster</name>
        <dbReference type="ChEBI" id="CHEBI:190135"/>
    </cofactor>
    <text evidence="1">Binds 1 [2Fe-2S] cluster per subunit. This cluster acts as a Lewis acid cofactor.</text>
</comment>
<comment type="cofactor">
    <cofactor evidence="1">
        <name>Mg(2+)</name>
        <dbReference type="ChEBI" id="CHEBI:18420"/>
    </cofactor>
</comment>
<comment type="pathway">
    <text evidence="1">Amino-acid biosynthesis; L-isoleucine biosynthesis; L-isoleucine from 2-oxobutanoate: step 3/4.</text>
</comment>
<comment type="pathway">
    <text evidence="1">Amino-acid biosynthesis; L-valine biosynthesis; L-valine from pyruvate: step 3/4.</text>
</comment>
<comment type="subunit">
    <text evidence="1">Homodimer.</text>
</comment>
<comment type="similarity">
    <text evidence="1">Belongs to the IlvD/Edd family.</text>
</comment>
<feature type="chain" id="PRO_0000225412" description="Dihydroxy-acid dehydratase">
    <location>
        <begin position="1"/>
        <end position="615"/>
    </location>
</feature>
<feature type="active site" description="Proton acceptor" evidence="1">
    <location>
        <position position="515"/>
    </location>
</feature>
<feature type="binding site" evidence="1">
    <location>
        <position position="81"/>
    </location>
    <ligand>
        <name>Mg(2+)</name>
        <dbReference type="ChEBI" id="CHEBI:18420"/>
    </ligand>
</feature>
<feature type="binding site" evidence="1">
    <location>
        <position position="122"/>
    </location>
    <ligand>
        <name>[2Fe-2S] cluster</name>
        <dbReference type="ChEBI" id="CHEBI:190135"/>
    </ligand>
</feature>
<feature type="binding site" evidence="1">
    <location>
        <position position="123"/>
    </location>
    <ligand>
        <name>Mg(2+)</name>
        <dbReference type="ChEBI" id="CHEBI:18420"/>
    </ligand>
</feature>
<feature type="binding site" description="via carbamate group" evidence="1">
    <location>
        <position position="124"/>
    </location>
    <ligand>
        <name>Mg(2+)</name>
        <dbReference type="ChEBI" id="CHEBI:18420"/>
    </ligand>
</feature>
<feature type="binding site" evidence="1">
    <location>
        <position position="193"/>
    </location>
    <ligand>
        <name>[2Fe-2S] cluster</name>
        <dbReference type="ChEBI" id="CHEBI:190135"/>
    </ligand>
</feature>
<feature type="binding site" evidence="1">
    <location>
        <position position="489"/>
    </location>
    <ligand>
        <name>Mg(2+)</name>
        <dbReference type="ChEBI" id="CHEBI:18420"/>
    </ligand>
</feature>
<feature type="modified residue" description="N6-carboxylysine" evidence="1">
    <location>
        <position position="124"/>
    </location>
</feature>
<name>ILVD_PSE14</name>
<protein>
    <recommendedName>
        <fullName evidence="1">Dihydroxy-acid dehydratase</fullName>
        <shortName evidence="1">DAD</shortName>
        <ecNumber evidence="1">4.2.1.9</ecNumber>
    </recommendedName>
</protein>
<sequence>MPDYRSKTSTHGRNMAGARALWRATGMKDEDFKKPIIAIANSFTQFVPGHVHLKDMGQLVAREVERAGGVAKEFNTIAVDDGIAMGHDGMLYSLPSREIIADSVEYMVNAHCADAIVCISNCDKITPGMLMASLRLNIPVIFVSGGPMEAGKTKLASHGLDLVDAMVIAADSTASDEKVAEYERSACPTCGSCSGMFTANSMNCLTEALGLALPGNGSALATHSDREQLFLQAGRTIVDLCRQYYKENDDSVLPRNIANFKAFENAMTLDIAMGGSTNTILHLLAAAQEAEIDFDLRHIDRLSRKVPQLCKVAPNIQKYHMEDVHRAGGIFSILGELARGGLLHTDLPTVHSKTLAEGIAKWDITQTDDEAVHTFFKAGPAGIPTQTAFSQSTRWDSLDDDRENGCIRSVEHAYSQEGGLAVLYGNIALDGCVVKTAGVDESIHVFEGNAKIFESQDSAVRGILADEVKAGDIVIIRYEGPKGGPGMQEMLYPTSYLKSKGLGKDCALLTDGRFSGGTSGLSIGHASPEAAAGGAIGLVRDGDKVLIDIPNRSINLLIDDAEMAERRTEQDKKGWKPVESRPRKVTTALKAYALLATSADKGAVRDKALLDKLVP</sequence>
<organism>
    <name type="scientific">Pseudomonas savastanoi pv. phaseolicola (strain 1448A / Race 6)</name>
    <name type="common">Pseudomonas syringae pv. phaseolicola (strain 1448A / Race 6)</name>
    <dbReference type="NCBI Taxonomy" id="264730"/>
    <lineage>
        <taxon>Bacteria</taxon>
        <taxon>Pseudomonadati</taxon>
        <taxon>Pseudomonadota</taxon>
        <taxon>Gammaproteobacteria</taxon>
        <taxon>Pseudomonadales</taxon>
        <taxon>Pseudomonadaceae</taxon>
        <taxon>Pseudomonas</taxon>
    </lineage>
</organism>
<gene>
    <name evidence="1" type="primary">ilvD</name>
    <name type="ordered locus">PSPPH_0460</name>
</gene>
<dbReference type="EC" id="4.2.1.9" evidence="1"/>
<dbReference type="EMBL" id="CP000058">
    <property type="protein sequence ID" value="AAZ37903.1"/>
    <property type="molecule type" value="Genomic_DNA"/>
</dbReference>
<dbReference type="RefSeq" id="WP_004667272.1">
    <property type="nucleotide sequence ID" value="NC_005773.3"/>
</dbReference>
<dbReference type="SMR" id="Q48PA6"/>
<dbReference type="KEGG" id="psp:PSPPH_0460"/>
<dbReference type="eggNOG" id="COG0129">
    <property type="taxonomic scope" value="Bacteria"/>
</dbReference>
<dbReference type="HOGENOM" id="CLU_014271_4_2_6"/>
<dbReference type="UniPathway" id="UPA00047">
    <property type="reaction ID" value="UER00057"/>
</dbReference>
<dbReference type="UniPathway" id="UPA00049">
    <property type="reaction ID" value="UER00061"/>
</dbReference>
<dbReference type="Proteomes" id="UP000000551">
    <property type="component" value="Chromosome"/>
</dbReference>
<dbReference type="GO" id="GO:0005829">
    <property type="term" value="C:cytosol"/>
    <property type="evidence" value="ECO:0007669"/>
    <property type="project" value="TreeGrafter"/>
</dbReference>
<dbReference type="GO" id="GO:0051537">
    <property type="term" value="F:2 iron, 2 sulfur cluster binding"/>
    <property type="evidence" value="ECO:0007669"/>
    <property type="project" value="UniProtKB-UniRule"/>
</dbReference>
<dbReference type="GO" id="GO:0004160">
    <property type="term" value="F:dihydroxy-acid dehydratase activity"/>
    <property type="evidence" value="ECO:0007669"/>
    <property type="project" value="UniProtKB-UniRule"/>
</dbReference>
<dbReference type="GO" id="GO:0000287">
    <property type="term" value="F:magnesium ion binding"/>
    <property type="evidence" value="ECO:0007669"/>
    <property type="project" value="UniProtKB-UniRule"/>
</dbReference>
<dbReference type="GO" id="GO:0009097">
    <property type="term" value="P:isoleucine biosynthetic process"/>
    <property type="evidence" value="ECO:0007669"/>
    <property type="project" value="UniProtKB-UniRule"/>
</dbReference>
<dbReference type="GO" id="GO:0009099">
    <property type="term" value="P:L-valine biosynthetic process"/>
    <property type="evidence" value="ECO:0007669"/>
    <property type="project" value="UniProtKB-UniRule"/>
</dbReference>
<dbReference type="FunFam" id="3.50.30.80:FF:000001">
    <property type="entry name" value="Dihydroxy-acid dehydratase"/>
    <property type="match status" value="1"/>
</dbReference>
<dbReference type="Gene3D" id="3.50.30.80">
    <property type="entry name" value="IlvD/EDD C-terminal domain-like"/>
    <property type="match status" value="1"/>
</dbReference>
<dbReference type="HAMAP" id="MF_00012">
    <property type="entry name" value="IlvD"/>
    <property type="match status" value="1"/>
</dbReference>
<dbReference type="InterPro" id="IPR042096">
    <property type="entry name" value="Dihydro-acid_dehy_C"/>
</dbReference>
<dbReference type="InterPro" id="IPR004404">
    <property type="entry name" value="DihydroxyA_deHydtase"/>
</dbReference>
<dbReference type="InterPro" id="IPR020558">
    <property type="entry name" value="DiOHA_6PGluconate_deHydtase_CS"/>
</dbReference>
<dbReference type="InterPro" id="IPR056740">
    <property type="entry name" value="ILV_EDD_C"/>
</dbReference>
<dbReference type="InterPro" id="IPR000581">
    <property type="entry name" value="ILV_EDD_N"/>
</dbReference>
<dbReference type="InterPro" id="IPR037237">
    <property type="entry name" value="IlvD/EDD_N"/>
</dbReference>
<dbReference type="NCBIfam" id="TIGR00110">
    <property type="entry name" value="ilvD"/>
    <property type="match status" value="1"/>
</dbReference>
<dbReference type="NCBIfam" id="NF009103">
    <property type="entry name" value="PRK12448.1"/>
    <property type="match status" value="1"/>
</dbReference>
<dbReference type="PANTHER" id="PTHR43661">
    <property type="entry name" value="D-XYLONATE DEHYDRATASE"/>
    <property type="match status" value="1"/>
</dbReference>
<dbReference type="PANTHER" id="PTHR43661:SF3">
    <property type="entry name" value="D-XYLONATE DEHYDRATASE YAGF-RELATED"/>
    <property type="match status" value="1"/>
</dbReference>
<dbReference type="Pfam" id="PF24877">
    <property type="entry name" value="ILV_EDD_C"/>
    <property type="match status" value="1"/>
</dbReference>
<dbReference type="Pfam" id="PF00920">
    <property type="entry name" value="ILVD_EDD_N"/>
    <property type="match status" value="1"/>
</dbReference>
<dbReference type="SUPFAM" id="SSF143975">
    <property type="entry name" value="IlvD/EDD N-terminal domain-like"/>
    <property type="match status" value="1"/>
</dbReference>
<dbReference type="SUPFAM" id="SSF52016">
    <property type="entry name" value="LeuD/IlvD-like"/>
    <property type="match status" value="1"/>
</dbReference>
<dbReference type="PROSITE" id="PS00886">
    <property type="entry name" value="ILVD_EDD_1"/>
    <property type="match status" value="1"/>
</dbReference>
<dbReference type="PROSITE" id="PS00887">
    <property type="entry name" value="ILVD_EDD_2"/>
    <property type="match status" value="1"/>
</dbReference>
<keyword id="KW-0001">2Fe-2S</keyword>
<keyword id="KW-0028">Amino-acid biosynthesis</keyword>
<keyword id="KW-0100">Branched-chain amino acid biosynthesis</keyword>
<keyword id="KW-0408">Iron</keyword>
<keyword id="KW-0411">Iron-sulfur</keyword>
<keyword id="KW-0456">Lyase</keyword>
<keyword id="KW-0460">Magnesium</keyword>
<keyword id="KW-0479">Metal-binding</keyword>
<evidence type="ECO:0000255" key="1">
    <source>
        <dbReference type="HAMAP-Rule" id="MF_00012"/>
    </source>
</evidence>
<reference key="1">
    <citation type="journal article" date="2005" name="J. Bacteriol.">
        <title>Whole-genome sequence analysis of Pseudomonas syringae pv. phaseolicola 1448A reveals divergence among pathovars in genes involved in virulence and transposition.</title>
        <authorList>
            <person name="Joardar V."/>
            <person name="Lindeberg M."/>
            <person name="Jackson R.W."/>
            <person name="Selengut J."/>
            <person name="Dodson R."/>
            <person name="Brinkac L.M."/>
            <person name="Daugherty S.C."/>
            <person name="DeBoy R.T."/>
            <person name="Durkin A.S."/>
            <person name="Gwinn Giglio M."/>
            <person name="Madupu R."/>
            <person name="Nelson W.C."/>
            <person name="Rosovitz M.J."/>
            <person name="Sullivan S.A."/>
            <person name="Crabtree J."/>
            <person name="Creasy T."/>
            <person name="Davidsen T.M."/>
            <person name="Haft D.H."/>
            <person name="Zafar N."/>
            <person name="Zhou L."/>
            <person name="Halpin R."/>
            <person name="Holley T."/>
            <person name="Khouri H.M."/>
            <person name="Feldblyum T.V."/>
            <person name="White O."/>
            <person name="Fraser C.M."/>
            <person name="Chatterjee A.K."/>
            <person name="Cartinhour S."/>
            <person name="Schneider D."/>
            <person name="Mansfield J.W."/>
            <person name="Collmer A."/>
            <person name="Buell R."/>
        </authorList>
    </citation>
    <scope>NUCLEOTIDE SEQUENCE [LARGE SCALE GENOMIC DNA]</scope>
    <source>
        <strain>1448A / Race 6</strain>
    </source>
</reference>
<accession>Q48PA6</accession>